<comment type="function">
    <text evidence="1">Participates actively in the response to hyperosmotic and heat shock by preventing the aggregation of stress-denatured proteins, in association with DnaK and GrpE. It is the nucleotide exchange factor for DnaK and may function as a thermosensor. Unfolded proteins bind initially to DnaJ; upon interaction with the DnaJ-bound protein, DnaK hydrolyzes its bound ATP, resulting in the formation of a stable complex. GrpE releases ADP from DnaK; ATP binding to DnaK triggers the release of the substrate protein, thus completing the reaction cycle. Several rounds of ATP-dependent interactions between DnaJ, DnaK and GrpE are required for fully efficient folding.</text>
</comment>
<comment type="subunit">
    <text evidence="1">Homodimer.</text>
</comment>
<comment type="subcellular location">
    <subcellularLocation>
        <location evidence="1">Cytoplasm</location>
    </subcellularLocation>
</comment>
<comment type="similarity">
    <text evidence="1">Belongs to the GrpE family.</text>
</comment>
<evidence type="ECO:0000255" key="1">
    <source>
        <dbReference type="HAMAP-Rule" id="MF_01151"/>
    </source>
</evidence>
<evidence type="ECO:0000256" key="2">
    <source>
        <dbReference type="SAM" id="MobiDB-lite"/>
    </source>
</evidence>
<feature type="chain" id="PRO_1000137533" description="Protein GrpE">
    <location>
        <begin position="1"/>
        <end position="191"/>
    </location>
</feature>
<feature type="region of interest" description="Disordered" evidence="2">
    <location>
        <begin position="1"/>
        <end position="28"/>
    </location>
</feature>
<feature type="compositionally biased region" description="Basic and acidic residues" evidence="2">
    <location>
        <begin position="1"/>
        <end position="10"/>
    </location>
</feature>
<dbReference type="EMBL" id="CP000644">
    <property type="protein sequence ID" value="ABO90998.1"/>
    <property type="molecule type" value="Genomic_DNA"/>
</dbReference>
<dbReference type="RefSeq" id="WP_005312586.1">
    <property type="nucleotide sequence ID" value="NC_009348.1"/>
</dbReference>
<dbReference type="SMR" id="A4SQ26"/>
<dbReference type="STRING" id="29491.GCA_000820065_02234"/>
<dbReference type="GeneID" id="79880715"/>
<dbReference type="KEGG" id="asa:ASA_2997"/>
<dbReference type="eggNOG" id="COG0576">
    <property type="taxonomic scope" value="Bacteria"/>
</dbReference>
<dbReference type="HOGENOM" id="CLU_057217_6_0_6"/>
<dbReference type="Proteomes" id="UP000000225">
    <property type="component" value="Chromosome"/>
</dbReference>
<dbReference type="GO" id="GO:0005829">
    <property type="term" value="C:cytosol"/>
    <property type="evidence" value="ECO:0007669"/>
    <property type="project" value="TreeGrafter"/>
</dbReference>
<dbReference type="GO" id="GO:0000774">
    <property type="term" value="F:adenyl-nucleotide exchange factor activity"/>
    <property type="evidence" value="ECO:0007669"/>
    <property type="project" value="InterPro"/>
</dbReference>
<dbReference type="GO" id="GO:0042803">
    <property type="term" value="F:protein homodimerization activity"/>
    <property type="evidence" value="ECO:0007669"/>
    <property type="project" value="InterPro"/>
</dbReference>
<dbReference type="GO" id="GO:0051087">
    <property type="term" value="F:protein-folding chaperone binding"/>
    <property type="evidence" value="ECO:0007669"/>
    <property type="project" value="InterPro"/>
</dbReference>
<dbReference type="GO" id="GO:0051082">
    <property type="term" value="F:unfolded protein binding"/>
    <property type="evidence" value="ECO:0007669"/>
    <property type="project" value="TreeGrafter"/>
</dbReference>
<dbReference type="GO" id="GO:0006457">
    <property type="term" value="P:protein folding"/>
    <property type="evidence" value="ECO:0007669"/>
    <property type="project" value="InterPro"/>
</dbReference>
<dbReference type="CDD" id="cd00446">
    <property type="entry name" value="GrpE"/>
    <property type="match status" value="1"/>
</dbReference>
<dbReference type="FunFam" id="2.30.22.10:FF:000001">
    <property type="entry name" value="Protein GrpE"/>
    <property type="match status" value="1"/>
</dbReference>
<dbReference type="Gene3D" id="3.90.20.20">
    <property type="match status" value="1"/>
</dbReference>
<dbReference type="Gene3D" id="2.30.22.10">
    <property type="entry name" value="Head domain of nucleotide exchange factor GrpE"/>
    <property type="match status" value="1"/>
</dbReference>
<dbReference type="HAMAP" id="MF_01151">
    <property type="entry name" value="GrpE"/>
    <property type="match status" value="1"/>
</dbReference>
<dbReference type="InterPro" id="IPR000740">
    <property type="entry name" value="GrpE"/>
</dbReference>
<dbReference type="InterPro" id="IPR013805">
    <property type="entry name" value="GrpE_coiled_coil"/>
</dbReference>
<dbReference type="InterPro" id="IPR009012">
    <property type="entry name" value="GrpE_head"/>
</dbReference>
<dbReference type="NCBIfam" id="NF010737">
    <property type="entry name" value="PRK14139.1"/>
    <property type="match status" value="1"/>
</dbReference>
<dbReference type="NCBIfam" id="NF010738">
    <property type="entry name" value="PRK14140.1"/>
    <property type="match status" value="1"/>
</dbReference>
<dbReference type="NCBIfam" id="NF010748">
    <property type="entry name" value="PRK14150.1"/>
    <property type="match status" value="1"/>
</dbReference>
<dbReference type="PANTHER" id="PTHR21237">
    <property type="entry name" value="GRPE PROTEIN"/>
    <property type="match status" value="1"/>
</dbReference>
<dbReference type="PANTHER" id="PTHR21237:SF23">
    <property type="entry name" value="GRPE PROTEIN HOMOLOG, MITOCHONDRIAL"/>
    <property type="match status" value="1"/>
</dbReference>
<dbReference type="Pfam" id="PF01025">
    <property type="entry name" value="GrpE"/>
    <property type="match status" value="1"/>
</dbReference>
<dbReference type="PRINTS" id="PR00773">
    <property type="entry name" value="GRPEPROTEIN"/>
</dbReference>
<dbReference type="SUPFAM" id="SSF58014">
    <property type="entry name" value="Coiled-coil domain of nucleotide exchange factor GrpE"/>
    <property type="match status" value="1"/>
</dbReference>
<dbReference type="SUPFAM" id="SSF51064">
    <property type="entry name" value="Head domain of nucleotide exchange factor GrpE"/>
    <property type="match status" value="1"/>
</dbReference>
<dbReference type="PROSITE" id="PS01071">
    <property type="entry name" value="GRPE"/>
    <property type="match status" value="1"/>
</dbReference>
<sequence length="191" mass="21198">MNHEEQKVETMEQVEAQPVEPTDVDSEVTAEQARIAELEAQLEAAQLASNEERERAIRAVAEMENLRRRAAQDVEKAHKFALEKFAAELLPVLDNLERAIELADKESEELKPMIEGVELTLKSMQSGVAKFGLNPLDPLNQPFDPNAHQAMSMIENGELAPNTVIAVMQKGYELNGRVIRPAMVMVSKAPA</sequence>
<gene>
    <name evidence="1" type="primary">grpE</name>
    <name type="ordered locus">ASA_2997</name>
</gene>
<name>GRPE_AERS4</name>
<organism>
    <name type="scientific">Aeromonas salmonicida (strain A449)</name>
    <dbReference type="NCBI Taxonomy" id="382245"/>
    <lineage>
        <taxon>Bacteria</taxon>
        <taxon>Pseudomonadati</taxon>
        <taxon>Pseudomonadota</taxon>
        <taxon>Gammaproteobacteria</taxon>
        <taxon>Aeromonadales</taxon>
        <taxon>Aeromonadaceae</taxon>
        <taxon>Aeromonas</taxon>
    </lineage>
</organism>
<proteinExistence type="inferred from homology"/>
<keyword id="KW-0143">Chaperone</keyword>
<keyword id="KW-0963">Cytoplasm</keyword>
<keyword id="KW-0346">Stress response</keyword>
<reference key="1">
    <citation type="journal article" date="2008" name="BMC Genomics">
        <title>The genome of Aeromonas salmonicida subsp. salmonicida A449: insights into the evolution of a fish pathogen.</title>
        <authorList>
            <person name="Reith M.E."/>
            <person name="Singh R.K."/>
            <person name="Curtis B."/>
            <person name="Boyd J.M."/>
            <person name="Bouevitch A."/>
            <person name="Kimball J."/>
            <person name="Munholland J."/>
            <person name="Murphy C."/>
            <person name="Sarty D."/>
            <person name="Williams J."/>
            <person name="Nash J.H."/>
            <person name="Johnson S.C."/>
            <person name="Brown L.L."/>
        </authorList>
    </citation>
    <scope>NUCLEOTIDE SEQUENCE [LARGE SCALE GENOMIC DNA]</scope>
    <source>
        <strain>A449</strain>
    </source>
</reference>
<accession>A4SQ26</accession>
<protein>
    <recommendedName>
        <fullName evidence="1">Protein GrpE</fullName>
    </recommendedName>
    <alternativeName>
        <fullName evidence="1">HSP-70 cofactor</fullName>
    </alternativeName>
</protein>